<gene>
    <name evidence="1" type="primary">psaA</name>
    <name type="ORF">JNC0421</name>
</gene>
<dbReference type="EC" id="1.97.1.12" evidence="1"/>
<dbReference type="EMBL" id="DQ673255">
    <property type="protein sequence ID" value="ABG74628.1"/>
    <property type="molecule type" value="Genomic_DNA"/>
</dbReference>
<dbReference type="RefSeq" id="YP_778490.1">
    <property type="nucleotide sequence ID" value="NC_008407.1"/>
</dbReference>
<dbReference type="SMR" id="Q06RD1"/>
<dbReference type="GeneID" id="4319823"/>
<dbReference type="GO" id="GO:0009535">
    <property type="term" value="C:chloroplast thylakoid membrane"/>
    <property type="evidence" value="ECO:0007669"/>
    <property type="project" value="UniProtKB-SubCell"/>
</dbReference>
<dbReference type="GO" id="GO:0009522">
    <property type="term" value="C:photosystem I"/>
    <property type="evidence" value="ECO:0007669"/>
    <property type="project" value="UniProtKB-KW"/>
</dbReference>
<dbReference type="GO" id="GO:0051539">
    <property type="term" value="F:4 iron, 4 sulfur cluster binding"/>
    <property type="evidence" value="ECO:0007669"/>
    <property type="project" value="UniProtKB-KW"/>
</dbReference>
<dbReference type="GO" id="GO:0016168">
    <property type="term" value="F:chlorophyll binding"/>
    <property type="evidence" value="ECO:0007669"/>
    <property type="project" value="UniProtKB-KW"/>
</dbReference>
<dbReference type="GO" id="GO:0009055">
    <property type="term" value="F:electron transfer activity"/>
    <property type="evidence" value="ECO:0007669"/>
    <property type="project" value="UniProtKB-UniRule"/>
</dbReference>
<dbReference type="GO" id="GO:0000287">
    <property type="term" value="F:magnesium ion binding"/>
    <property type="evidence" value="ECO:0007669"/>
    <property type="project" value="UniProtKB-UniRule"/>
</dbReference>
<dbReference type="GO" id="GO:0016491">
    <property type="term" value="F:oxidoreductase activity"/>
    <property type="evidence" value="ECO:0007669"/>
    <property type="project" value="UniProtKB-KW"/>
</dbReference>
<dbReference type="GO" id="GO:0015979">
    <property type="term" value="P:photosynthesis"/>
    <property type="evidence" value="ECO:0007669"/>
    <property type="project" value="UniProtKB-UniRule"/>
</dbReference>
<dbReference type="FunFam" id="1.20.1130.10:FF:000001">
    <property type="entry name" value="Photosystem I P700 chlorophyll a apoprotein A2"/>
    <property type="match status" value="1"/>
</dbReference>
<dbReference type="Gene3D" id="1.20.1130.10">
    <property type="entry name" value="Photosystem I PsaA/PsaB"/>
    <property type="match status" value="1"/>
</dbReference>
<dbReference type="HAMAP" id="MF_00458">
    <property type="entry name" value="PSI_PsaA"/>
    <property type="match status" value="1"/>
</dbReference>
<dbReference type="InterPro" id="IPR006243">
    <property type="entry name" value="PSI_PsaA"/>
</dbReference>
<dbReference type="InterPro" id="IPR001280">
    <property type="entry name" value="PSI_PsaA/B"/>
</dbReference>
<dbReference type="InterPro" id="IPR020586">
    <property type="entry name" value="PSI_PsaA/B_CS"/>
</dbReference>
<dbReference type="InterPro" id="IPR036408">
    <property type="entry name" value="PSI_PsaA/B_sf"/>
</dbReference>
<dbReference type="NCBIfam" id="TIGR01335">
    <property type="entry name" value="psaA"/>
    <property type="match status" value="1"/>
</dbReference>
<dbReference type="PANTHER" id="PTHR30128">
    <property type="entry name" value="OUTER MEMBRANE PROTEIN, OMPA-RELATED"/>
    <property type="match status" value="1"/>
</dbReference>
<dbReference type="PANTHER" id="PTHR30128:SF19">
    <property type="entry name" value="PHOTOSYSTEM I P700 CHLOROPHYLL A APOPROTEIN A1-RELATED"/>
    <property type="match status" value="1"/>
</dbReference>
<dbReference type="Pfam" id="PF00223">
    <property type="entry name" value="PsaA_PsaB"/>
    <property type="match status" value="1"/>
</dbReference>
<dbReference type="PIRSF" id="PIRSF002905">
    <property type="entry name" value="PSI_A"/>
    <property type="match status" value="1"/>
</dbReference>
<dbReference type="PRINTS" id="PR00257">
    <property type="entry name" value="PHOTSYSPSAAB"/>
</dbReference>
<dbReference type="SUPFAM" id="SSF81558">
    <property type="entry name" value="Photosystem I subunits PsaA/PsaB"/>
    <property type="match status" value="1"/>
</dbReference>
<dbReference type="PROSITE" id="PS00419">
    <property type="entry name" value="PHOTOSYSTEM_I_PSAAB"/>
    <property type="match status" value="1"/>
</dbReference>
<accession>Q06RD1</accession>
<proteinExistence type="inferred from homology"/>
<reference key="1">
    <citation type="journal article" date="2007" name="Mol. Biol. Evol.">
        <title>Gene relocations within chloroplast genomes of Jasminum and Menodora (Oleaceae) are due to multiple, overlapping inversions.</title>
        <authorList>
            <person name="Lee H.-L."/>
            <person name="Jansen R.K."/>
            <person name="Chumley T.W."/>
            <person name="Kim K.-J."/>
        </authorList>
    </citation>
    <scope>NUCLEOTIDE SEQUENCE [LARGE SCALE GENOMIC DNA]</scope>
</reference>
<feature type="chain" id="PRO_0000275948" description="Photosystem I P700 chlorophyll a apoprotein A1">
    <location>
        <begin position="1"/>
        <end position="750"/>
    </location>
</feature>
<feature type="transmembrane region" description="Helical; Name=I" evidence="1">
    <location>
        <begin position="70"/>
        <end position="93"/>
    </location>
</feature>
<feature type="transmembrane region" description="Helical; Name=II" evidence="1">
    <location>
        <begin position="156"/>
        <end position="179"/>
    </location>
</feature>
<feature type="transmembrane region" description="Helical; Name=III" evidence="1">
    <location>
        <begin position="195"/>
        <end position="219"/>
    </location>
</feature>
<feature type="transmembrane region" description="Helical; Name=IV" evidence="1">
    <location>
        <begin position="291"/>
        <end position="309"/>
    </location>
</feature>
<feature type="transmembrane region" description="Helical; Name=V" evidence="1">
    <location>
        <begin position="346"/>
        <end position="369"/>
    </location>
</feature>
<feature type="transmembrane region" description="Helical; Name=VI" evidence="1">
    <location>
        <begin position="385"/>
        <end position="411"/>
    </location>
</feature>
<feature type="transmembrane region" description="Helical; Name=VII" evidence="1">
    <location>
        <begin position="433"/>
        <end position="455"/>
    </location>
</feature>
<feature type="transmembrane region" description="Helical; Name=VIII" evidence="1">
    <location>
        <begin position="531"/>
        <end position="549"/>
    </location>
</feature>
<feature type="transmembrane region" description="Helical; Name=IX" evidence="1">
    <location>
        <begin position="589"/>
        <end position="610"/>
    </location>
</feature>
<feature type="transmembrane region" description="Helical; Name=X" evidence="1">
    <location>
        <begin position="664"/>
        <end position="686"/>
    </location>
</feature>
<feature type="transmembrane region" description="Helical; Name=XI" evidence="1">
    <location>
        <begin position="724"/>
        <end position="744"/>
    </location>
</feature>
<feature type="binding site" evidence="1">
    <location>
        <position position="573"/>
    </location>
    <ligand>
        <name>[4Fe-4S] cluster</name>
        <dbReference type="ChEBI" id="CHEBI:49883"/>
        <note>ligand shared between dimeric partners</note>
    </ligand>
</feature>
<feature type="binding site" evidence="1">
    <location>
        <position position="582"/>
    </location>
    <ligand>
        <name>[4Fe-4S] cluster</name>
        <dbReference type="ChEBI" id="CHEBI:49883"/>
        <note>ligand shared between dimeric partners</note>
    </ligand>
</feature>
<feature type="binding site" description="axial binding residue" evidence="1">
    <location>
        <position position="675"/>
    </location>
    <ligand>
        <name>chlorophyll a'</name>
        <dbReference type="ChEBI" id="CHEBI:189419"/>
        <label>A1</label>
    </ligand>
    <ligandPart>
        <name>Mg</name>
        <dbReference type="ChEBI" id="CHEBI:25107"/>
    </ligandPart>
</feature>
<feature type="binding site" description="axial binding residue" evidence="1">
    <location>
        <position position="683"/>
    </location>
    <ligand>
        <name>chlorophyll a</name>
        <dbReference type="ChEBI" id="CHEBI:58416"/>
        <label>A3</label>
    </ligand>
    <ligandPart>
        <name>Mg</name>
        <dbReference type="ChEBI" id="CHEBI:25107"/>
    </ligandPart>
</feature>
<feature type="binding site" evidence="1">
    <location>
        <position position="691"/>
    </location>
    <ligand>
        <name>chlorophyll a</name>
        <dbReference type="ChEBI" id="CHEBI:58416"/>
        <label>A3</label>
    </ligand>
</feature>
<feature type="binding site" evidence="1">
    <location>
        <position position="692"/>
    </location>
    <ligand>
        <name>phylloquinone</name>
        <dbReference type="ChEBI" id="CHEBI:18067"/>
        <label>A</label>
    </ligand>
</feature>
<organism>
    <name type="scientific">Jasminum nudiflorum</name>
    <name type="common">Winter jasmine</name>
    <dbReference type="NCBI Taxonomy" id="126431"/>
    <lineage>
        <taxon>Eukaryota</taxon>
        <taxon>Viridiplantae</taxon>
        <taxon>Streptophyta</taxon>
        <taxon>Embryophyta</taxon>
        <taxon>Tracheophyta</taxon>
        <taxon>Spermatophyta</taxon>
        <taxon>Magnoliopsida</taxon>
        <taxon>eudicotyledons</taxon>
        <taxon>Gunneridae</taxon>
        <taxon>Pentapetalae</taxon>
        <taxon>asterids</taxon>
        <taxon>lamiids</taxon>
        <taxon>Lamiales</taxon>
        <taxon>Oleaceae</taxon>
        <taxon>Jasmineae</taxon>
        <taxon>Jasminum</taxon>
    </lineage>
</organism>
<geneLocation type="chloroplast"/>
<sequence length="750" mass="83096">MIIRSPEPEVKILVDRDHIKTSFEEWARPGHFSRTIAKGPDTTTWIWNLHADAHDFDSHTSDLEEISRKVFSAHFGQLSIIFLWLSGMYFHGARFSNYEAWLSDPTHIGPSAQVVWPIVGQEILNGDVGGGFRGIQITSGFFQIWRASGITSELQLYCTAIGALVFAALMLFAGWFHYHKAAPKLAWFQDVESMLNHHLAGLLGLGSLSWAGHQVHVSLPINQFLNAGVDPKEIPLPHEFILNRELLAQLYPSFAEGATPFFTLNWSKYAEFLSFHGGLDPVTGGLWLTDIAHHHLAIAILFLIAGHMYRTNWGIGHGLKDILEAHKGPFTGQGHKGLYEILTTSWHAQLSLNLAMLGSLTIVVAHHMYSMPPYPYLATDYGTQLSLFTHHMWIGGFLIVGAAAHAAIFMVRDYDPTTRYNDLLDRVLRHRDAIISHLNWACIFLGFHSFGLYIHNDTMSALGRPQDMFSDTAIQLQPVFAQWIQNTHALAPGATAPGATASTSLTWGGGDLVAVGGKVALLPIPLGTADFLVHHIHAFTIHVTVLILLKGVLFARSSRLIPDKANLGFRFPCDGPGRGGTCQVSAWDHVFLGLFWMYNSISVVIFHFSWKMQSDVWGSLSDQGVVTHITGGNFAQSSITINGWLRDFLWAQASQVIQSYGSSLSAYGLFFLGAHFVWAFSLMFLFSGRGYWQELIESIVWAHNKLKVAPATQPRALSIVQGRAVGVTHYLLGGIATTWAFFLARIIAVG</sequence>
<keyword id="KW-0004">4Fe-4S</keyword>
<keyword id="KW-0148">Chlorophyll</keyword>
<keyword id="KW-0150">Chloroplast</keyword>
<keyword id="KW-0157">Chromophore</keyword>
<keyword id="KW-0249">Electron transport</keyword>
<keyword id="KW-0408">Iron</keyword>
<keyword id="KW-0411">Iron-sulfur</keyword>
<keyword id="KW-0460">Magnesium</keyword>
<keyword id="KW-0472">Membrane</keyword>
<keyword id="KW-0479">Metal-binding</keyword>
<keyword id="KW-0560">Oxidoreductase</keyword>
<keyword id="KW-0602">Photosynthesis</keyword>
<keyword id="KW-0603">Photosystem I</keyword>
<keyword id="KW-0934">Plastid</keyword>
<keyword id="KW-0793">Thylakoid</keyword>
<keyword id="KW-0812">Transmembrane</keyword>
<keyword id="KW-1133">Transmembrane helix</keyword>
<keyword id="KW-0813">Transport</keyword>
<name>PSAA_JASNU</name>
<comment type="function">
    <text>PsaA and PsaB bind P700, the primary electron donor of photosystem I (PSI), as well as the electron acceptors A0, A1 and FX. PSI is a plastocyanin-ferredoxin oxidoreductase, converting photonic excitation into a charge separation, which transfers an electron from the donor P700 chlorophyll pair to the spectroscopically characterized acceptors A0, A1, FX, FA and FB in turn. Oxidized P700 is reduced on the lumenal side of the thylakoid membrane by plastocyanin.</text>
</comment>
<comment type="catalytic activity">
    <reaction evidence="1">
        <text>reduced [plastocyanin] + hnu + oxidized [2Fe-2S]-[ferredoxin] = oxidized [plastocyanin] + reduced [2Fe-2S]-[ferredoxin]</text>
        <dbReference type="Rhea" id="RHEA:30407"/>
        <dbReference type="Rhea" id="RHEA-COMP:10000"/>
        <dbReference type="Rhea" id="RHEA-COMP:10001"/>
        <dbReference type="Rhea" id="RHEA-COMP:10039"/>
        <dbReference type="Rhea" id="RHEA-COMP:10040"/>
        <dbReference type="ChEBI" id="CHEBI:29036"/>
        <dbReference type="ChEBI" id="CHEBI:30212"/>
        <dbReference type="ChEBI" id="CHEBI:33737"/>
        <dbReference type="ChEBI" id="CHEBI:33738"/>
        <dbReference type="ChEBI" id="CHEBI:49552"/>
        <dbReference type="EC" id="1.97.1.12"/>
    </reaction>
</comment>
<comment type="cofactor">
    <text evidence="1">P700 is a chlorophyll a/chlorophyll a' dimer, A0 is one or more chlorophyll a, A1 is one or both phylloquinones and FX is a shared 4Fe-4S iron-sulfur center.</text>
</comment>
<comment type="subunit">
    <text evidence="1">The PsaA/B heterodimer binds the P700 chlorophyll special pair and subsequent electron acceptors. PSI consists of a core antenna complex that captures photons, and an electron transfer chain that converts photonic excitation into a charge separation. The eukaryotic PSI reaction center is composed of at least 11 subunits.</text>
</comment>
<comment type="subcellular location">
    <subcellularLocation>
        <location evidence="1">Plastid</location>
        <location evidence="1">Chloroplast thylakoid membrane</location>
        <topology evidence="1">Multi-pass membrane protein</topology>
    </subcellularLocation>
</comment>
<comment type="similarity">
    <text evidence="1">Belongs to the PsaA/PsaB family.</text>
</comment>
<protein>
    <recommendedName>
        <fullName evidence="1">Photosystem I P700 chlorophyll a apoprotein A1</fullName>
        <ecNumber evidence="1">1.97.1.12</ecNumber>
    </recommendedName>
    <alternativeName>
        <fullName evidence="1">PSI-A</fullName>
    </alternativeName>
    <alternativeName>
        <fullName evidence="1">PsaA</fullName>
    </alternativeName>
</protein>
<evidence type="ECO:0000255" key="1">
    <source>
        <dbReference type="HAMAP-Rule" id="MF_00458"/>
    </source>
</evidence>